<proteinExistence type="inferred from homology"/>
<accession>Q8D8Q7</accession>
<reference key="1">
    <citation type="submission" date="2002-12" db="EMBL/GenBank/DDBJ databases">
        <title>Complete genome sequence of Vibrio vulnificus CMCP6.</title>
        <authorList>
            <person name="Rhee J.H."/>
            <person name="Kim S.Y."/>
            <person name="Chung S.S."/>
            <person name="Kim J.J."/>
            <person name="Moon Y.H."/>
            <person name="Jeong H."/>
            <person name="Choy H.E."/>
        </authorList>
    </citation>
    <scope>NUCLEOTIDE SEQUENCE [LARGE SCALE GENOMIC DNA]</scope>
    <source>
        <strain>CMCP6</strain>
    </source>
</reference>
<name>Y2912_VIBVU</name>
<sequence>MAASCPCGSNRTYALCCKIAHKHHANVITPEQLMRSRYSAHVLGLVDYVVNTYHPSCHAEEQREGIAESIENDWCKLEVVKAEVGSNENEGFVEFNAYFDEDGKRYCMTERSRFVKEDGLWYYIDGTFPEDEPEPDPRLNQSVSSLKVGRNDPCICGSGKKFKKCCG</sequence>
<evidence type="ECO:0000255" key="1">
    <source>
        <dbReference type="HAMAP-Rule" id="MF_00612"/>
    </source>
</evidence>
<gene>
    <name type="ordered locus">VV1_2912</name>
</gene>
<feature type="chain" id="PRO_0000071820" description="UPF0225 protein VV1_2912">
    <location>
        <begin position="1"/>
        <end position="167"/>
    </location>
</feature>
<protein>
    <recommendedName>
        <fullName evidence="1">UPF0225 protein VV1_2912</fullName>
    </recommendedName>
</protein>
<comment type="similarity">
    <text evidence="1">Belongs to the UPF0225 family.</text>
</comment>
<organism>
    <name type="scientific">Vibrio vulnificus (strain CMCP6)</name>
    <dbReference type="NCBI Taxonomy" id="216895"/>
    <lineage>
        <taxon>Bacteria</taxon>
        <taxon>Pseudomonadati</taxon>
        <taxon>Pseudomonadota</taxon>
        <taxon>Gammaproteobacteria</taxon>
        <taxon>Vibrionales</taxon>
        <taxon>Vibrionaceae</taxon>
        <taxon>Vibrio</taxon>
    </lineage>
</organism>
<dbReference type="EMBL" id="AE016795">
    <property type="protein sequence ID" value="AAO11245.1"/>
    <property type="molecule type" value="Genomic_DNA"/>
</dbReference>
<dbReference type="RefSeq" id="WP_011080732.1">
    <property type="nucleotide sequence ID" value="NC_004459.3"/>
</dbReference>
<dbReference type="SMR" id="Q8D8Q7"/>
<dbReference type="KEGG" id="vvu:VV1_2912"/>
<dbReference type="HOGENOM" id="CLU_099590_0_0_6"/>
<dbReference type="Proteomes" id="UP000002275">
    <property type="component" value="Chromosome 1"/>
</dbReference>
<dbReference type="Gene3D" id="3.10.450.50">
    <property type="match status" value="1"/>
</dbReference>
<dbReference type="HAMAP" id="MF_00612">
    <property type="entry name" value="UPF0225"/>
    <property type="match status" value="1"/>
</dbReference>
<dbReference type="InterPro" id="IPR032710">
    <property type="entry name" value="NTF2-like_dom_sf"/>
</dbReference>
<dbReference type="InterPro" id="IPR004027">
    <property type="entry name" value="SEC_C_motif"/>
</dbReference>
<dbReference type="InterPro" id="IPR023006">
    <property type="entry name" value="UPF0225"/>
</dbReference>
<dbReference type="InterPro" id="IPR048469">
    <property type="entry name" value="YchJ-like_M"/>
</dbReference>
<dbReference type="NCBIfam" id="NF002449">
    <property type="entry name" value="PRK01617.1"/>
    <property type="match status" value="1"/>
</dbReference>
<dbReference type="NCBIfam" id="NF002592">
    <property type="entry name" value="PRK02250.1"/>
    <property type="match status" value="1"/>
</dbReference>
<dbReference type="PANTHER" id="PTHR33747:SF1">
    <property type="entry name" value="ADENYLATE CYCLASE-ASSOCIATED CAP C-TERMINAL DOMAIN-CONTAINING PROTEIN"/>
    <property type="match status" value="1"/>
</dbReference>
<dbReference type="PANTHER" id="PTHR33747">
    <property type="entry name" value="UPF0225 PROTEIN SCO1677"/>
    <property type="match status" value="1"/>
</dbReference>
<dbReference type="Pfam" id="PF02810">
    <property type="entry name" value="SEC-C"/>
    <property type="match status" value="2"/>
</dbReference>
<dbReference type="Pfam" id="PF17775">
    <property type="entry name" value="YchJ_M-like"/>
    <property type="match status" value="1"/>
</dbReference>
<dbReference type="SUPFAM" id="SSF54427">
    <property type="entry name" value="NTF2-like"/>
    <property type="match status" value="1"/>
</dbReference>
<dbReference type="SUPFAM" id="SSF103642">
    <property type="entry name" value="Sec-C motif"/>
    <property type="match status" value="1"/>
</dbReference>